<evidence type="ECO:0000255" key="1">
    <source>
        <dbReference type="HAMAP-Rule" id="MF_00719"/>
    </source>
</evidence>
<sequence length="278" mass="29316">MLQFIRHYLLAVQFFTRIPVTGRLADWVGYSPGMLRASAVHFPGIGVVVGGAAAAMFALLQLLLPDTTFTPLVAAAFSTVATVWLTGGFHEDGLADVADGLGGSYDRERALEIMKDSRVGAFGAMALVLALLCKVALLALLGSVEAVPEAGEAPAFSSWYVCAALWTGHIVSRGLPLVMIWRLPHVGDIAISKSKPLADQISAGGLAIAFSWCFGALALASLALDAINLIVACGFSVLALLGLLRFFRRRLQGFTGDCLGTTQQVCEIAFYLGLAVSL</sequence>
<organism>
    <name type="scientific">Polaromonas naphthalenivorans (strain CJ2)</name>
    <dbReference type="NCBI Taxonomy" id="365044"/>
    <lineage>
        <taxon>Bacteria</taxon>
        <taxon>Pseudomonadati</taxon>
        <taxon>Pseudomonadota</taxon>
        <taxon>Betaproteobacteria</taxon>
        <taxon>Burkholderiales</taxon>
        <taxon>Comamonadaceae</taxon>
        <taxon>Polaromonas</taxon>
    </lineage>
</organism>
<comment type="function">
    <text evidence="1">Joins adenosylcobinamide-GDP and alpha-ribazole to generate adenosylcobalamin (Ado-cobalamin). Also synthesizes adenosylcobalamin 5'-phosphate from adenosylcobinamide-GDP and alpha-ribazole 5'-phosphate.</text>
</comment>
<comment type="catalytic activity">
    <reaction evidence="1">
        <text>alpha-ribazole + adenosylcob(III)inamide-GDP = adenosylcob(III)alamin + GMP + H(+)</text>
        <dbReference type="Rhea" id="RHEA:16049"/>
        <dbReference type="ChEBI" id="CHEBI:10329"/>
        <dbReference type="ChEBI" id="CHEBI:15378"/>
        <dbReference type="ChEBI" id="CHEBI:18408"/>
        <dbReference type="ChEBI" id="CHEBI:58115"/>
        <dbReference type="ChEBI" id="CHEBI:60487"/>
        <dbReference type="EC" id="2.7.8.26"/>
    </reaction>
</comment>
<comment type="catalytic activity">
    <reaction evidence="1">
        <text>alpha-ribazole 5'-phosphate + adenosylcob(III)inamide-GDP = adenosylcob(III)alamin 5'-phosphate + GMP + H(+)</text>
        <dbReference type="Rhea" id="RHEA:23560"/>
        <dbReference type="ChEBI" id="CHEBI:15378"/>
        <dbReference type="ChEBI" id="CHEBI:57918"/>
        <dbReference type="ChEBI" id="CHEBI:58115"/>
        <dbReference type="ChEBI" id="CHEBI:60487"/>
        <dbReference type="ChEBI" id="CHEBI:60493"/>
        <dbReference type="EC" id="2.7.8.26"/>
    </reaction>
</comment>
<comment type="cofactor">
    <cofactor evidence="1">
        <name>Mg(2+)</name>
        <dbReference type="ChEBI" id="CHEBI:18420"/>
    </cofactor>
</comment>
<comment type="pathway">
    <text evidence="1">Cofactor biosynthesis; adenosylcobalamin biosynthesis; adenosylcobalamin from cob(II)yrinate a,c-diamide: step 7/7.</text>
</comment>
<comment type="subcellular location">
    <subcellularLocation>
        <location evidence="1">Cell inner membrane</location>
        <topology evidence="1">Multi-pass membrane protein</topology>
    </subcellularLocation>
</comment>
<comment type="similarity">
    <text evidence="1">Belongs to the CobS family.</text>
</comment>
<keyword id="KW-0997">Cell inner membrane</keyword>
<keyword id="KW-1003">Cell membrane</keyword>
<keyword id="KW-0169">Cobalamin biosynthesis</keyword>
<keyword id="KW-0460">Magnesium</keyword>
<keyword id="KW-0472">Membrane</keyword>
<keyword id="KW-1185">Reference proteome</keyword>
<keyword id="KW-0808">Transferase</keyword>
<keyword id="KW-0812">Transmembrane</keyword>
<keyword id="KW-1133">Transmembrane helix</keyword>
<protein>
    <recommendedName>
        <fullName evidence="1">Adenosylcobinamide-GDP ribazoletransferase</fullName>
        <ecNumber evidence="1">2.7.8.26</ecNumber>
    </recommendedName>
    <alternativeName>
        <fullName evidence="1">Cobalamin synthase</fullName>
    </alternativeName>
    <alternativeName>
        <fullName evidence="1">Cobalamin-5'-phosphate synthase</fullName>
    </alternativeName>
</protein>
<dbReference type="EC" id="2.7.8.26" evidence="1"/>
<dbReference type="EMBL" id="CP000529">
    <property type="protein sequence ID" value="ABM35960.1"/>
    <property type="molecule type" value="Genomic_DNA"/>
</dbReference>
<dbReference type="RefSeq" id="WP_011800055.1">
    <property type="nucleotide sequence ID" value="NC_008781.1"/>
</dbReference>
<dbReference type="STRING" id="365044.Pnap_0641"/>
<dbReference type="KEGG" id="pna:Pnap_0641"/>
<dbReference type="eggNOG" id="COG0368">
    <property type="taxonomic scope" value="Bacteria"/>
</dbReference>
<dbReference type="HOGENOM" id="CLU_057426_1_1_4"/>
<dbReference type="OrthoDB" id="9794626at2"/>
<dbReference type="UniPathway" id="UPA00148">
    <property type="reaction ID" value="UER00238"/>
</dbReference>
<dbReference type="Proteomes" id="UP000000644">
    <property type="component" value="Chromosome"/>
</dbReference>
<dbReference type="GO" id="GO:0005886">
    <property type="term" value="C:plasma membrane"/>
    <property type="evidence" value="ECO:0007669"/>
    <property type="project" value="UniProtKB-SubCell"/>
</dbReference>
<dbReference type="GO" id="GO:0051073">
    <property type="term" value="F:adenosylcobinamide-GDP ribazoletransferase activity"/>
    <property type="evidence" value="ECO:0007669"/>
    <property type="project" value="UniProtKB-UniRule"/>
</dbReference>
<dbReference type="GO" id="GO:0008818">
    <property type="term" value="F:cobalamin 5'-phosphate synthase activity"/>
    <property type="evidence" value="ECO:0007669"/>
    <property type="project" value="UniProtKB-UniRule"/>
</dbReference>
<dbReference type="GO" id="GO:0009236">
    <property type="term" value="P:cobalamin biosynthetic process"/>
    <property type="evidence" value="ECO:0007669"/>
    <property type="project" value="UniProtKB-UniRule"/>
</dbReference>
<dbReference type="HAMAP" id="MF_00719">
    <property type="entry name" value="CobS"/>
    <property type="match status" value="1"/>
</dbReference>
<dbReference type="InterPro" id="IPR003805">
    <property type="entry name" value="CobS"/>
</dbReference>
<dbReference type="PANTHER" id="PTHR34148">
    <property type="entry name" value="ADENOSYLCOBINAMIDE-GDP RIBAZOLETRANSFERASE"/>
    <property type="match status" value="1"/>
</dbReference>
<dbReference type="PANTHER" id="PTHR34148:SF1">
    <property type="entry name" value="ADENOSYLCOBINAMIDE-GDP RIBAZOLETRANSFERASE"/>
    <property type="match status" value="1"/>
</dbReference>
<dbReference type="Pfam" id="PF02654">
    <property type="entry name" value="CobS"/>
    <property type="match status" value="1"/>
</dbReference>
<accession>A1VJY2</accession>
<name>COBS_POLNA</name>
<reference key="1">
    <citation type="journal article" date="2009" name="Environ. Microbiol.">
        <title>The genome of Polaromonas naphthalenivorans strain CJ2, isolated from coal tar-contaminated sediment, reveals physiological and metabolic versatility and evolution through extensive horizontal gene transfer.</title>
        <authorList>
            <person name="Yagi J.M."/>
            <person name="Sims D."/>
            <person name="Brettin T."/>
            <person name="Bruce D."/>
            <person name="Madsen E.L."/>
        </authorList>
    </citation>
    <scope>NUCLEOTIDE SEQUENCE [LARGE SCALE GENOMIC DNA]</scope>
    <source>
        <strain>CJ2</strain>
    </source>
</reference>
<feature type="chain" id="PRO_1000083258" description="Adenosylcobinamide-GDP ribazoletransferase">
    <location>
        <begin position="1"/>
        <end position="278"/>
    </location>
</feature>
<feature type="transmembrane region" description="Helical" evidence="1">
    <location>
        <begin position="44"/>
        <end position="64"/>
    </location>
</feature>
<feature type="transmembrane region" description="Helical" evidence="1">
    <location>
        <begin position="69"/>
        <end position="89"/>
    </location>
</feature>
<feature type="transmembrane region" description="Helical" evidence="1">
    <location>
        <begin position="121"/>
        <end position="141"/>
    </location>
</feature>
<feature type="transmembrane region" description="Helical" evidence="1">
    <location>
        <begin position="161"/>
        <end position="181"/>
    </location>
</feature>
<feature type="transmembrane region" description="Helical" evidence="1">
    <location>
        <begin position="204"/>
        <end position="224"/>
    </location>
</feature>
<feature type="transmembrane region" description="Helical" evidence="1">
    <location>
        <begin position="227"/>
        <end position="247"/>
    </location>
</feature>
<gene>
    <name evidence="1" type="primary">cobS</name>
    <name type="ordered locus">Pnap_0641</name>
</gene>
<proteinExistence type="inferred from homology"/>